<reference key="1">
    <citation type="submission" date="2008-05" db="EMBL/GenBank/DDBJ databases">
        <title>Complete sequence of chromosome of Geobacter lovleyi SZ.</title>
        <authorList>
            <consortium name="US DOE Joint Genome Institute"/>
            <person name="Lucas S."/>
            <person name="Copeland A."/>
            <person name="Lapidus A."/>
            <person name="Glavina del Rio T."/>
            <person name="Dalin E."/>
            <person name="Tice H."/>
            <person name="Bruce D."/>
            <person name="Goodwin L."/>
            <person name="Pitluck S."/>
            <person name="Chertkov O."/>
            <person name="Meincke L."/>
            <person name="Brettin T."/>
            <person name="Detter J.C."/>
            <person name="Han C."/>
            <person name="Tapia R."/>
            <person name="Kuske C.R."/>
            <person name="Schmutz J."/>
            <person name="Larimer F."/>
            <person name="Land M."/>
            <person name="Hauser L."/>
            <person name="Kyrpides N."/>
            <person name="Mikhailova N."/>
            <person name="Sung Y."/>
            <person name="Fletcher K.E."/>
            <person name="Ritalahti K.M."/>
            <person name="Loeffler F.E."/>
            <person name="Richardson P."/>
        </authorList>
    </citation>
    <scope>NUCLEOTIDE SEQUENCE [LARGE SCALE GENOMIC DNA]</scope>
    <source>
        <strain>ATCC BAA-1151 / DSM 17278 / SZ</strain>
    </source>
</reference>
<name>ATPE_TRIL1</name>
<dbReference type="EMBL" id="CP001089">
    <property type="protein sequence ID" value="ACD96875.1"/>
    <property type="molecule type" value="Genomic_DNA"/>
</dbReference>
<dbReference type="RefSeq" id="WP_012471199.1">
    <property type="nucleotide sequence ID" value="NC_010814.1"/>
</dbReference>
<dbReference type="SMR" id="B3EA00"/>
<dbReference type="STRING" id="398767.Glov_3169"/>
<dbReference type="KEGG" id="glo:Glov_3169"/>
<dbReference type="eggNOG" id="COG0355">
    <property type="taxonomic scope" value="Bacteria"/>
</dbReference>
<dbReference type="HOGENOM" id="CLU_084338_1_3_7"/>
<dbReference type="OrthoDB" id="9799969at2"/>
<dbReference type="Proteomes" id="UP000002420">
    <property type="component" value="Chromosome"/>
</dbReference>
<dbReference type="GO" id="GO:0005886">
    <property type="term" value="C:plasma membrane"/>
    <property type="evidence" value="ECO:0007669"/>
    <property type="project" value="UniProtKB-SubCell"/>
</dbReference>
<dbReference type="GO" id="GO:0045259">
    <property type="term" value="C:proton-transporting ATP synthase complex"/>
    <property type="evidence" value="ECO:0007669"/>
    <property type="project" value="UniProtKB-KW"/>
</dbReference>
<dbReference type="GO" id="GO:0005524">
    <property type="term" value="F:ATP binding"/>
    <property type="evidence" value="ECO:0007669"/>
    <property type="project" value="UniProtKB-UniRule"/>
</dbReference>
<dbReference type="GO" id="GO:0046933">
    <property type="term" value="F:proton-transporting ATP synthase activity, rotational mechanism"/>
    <property type="evidence" value="ECO:0007669"/>
    <property type="project" value="UniProtKB-UniRule"/>
</dbReference>
<dbReference type="CDD" id="cd12152">
    <property type="entry name" value="F1-ATPase_delta"/>
    <property type="match status" value="1"/>
</dbReference>
<dbReference type="Gene3D" id="1.20.5.440">
    <property type="entry name" value="ATP synthase delta/epsilon subunit, C-terminal domain"/>
    <property type="match status" value="1"/>
</dbReference>
<dbReference type="Gene3D" id="2.60.15.10">
    <property type="entry name" value="F0F1 ATP synthase delta/epsilon subunit, N-terminal"/>
    <property type="match status" value="1"/>
</dbReference>
<dbReference type="HAMAP" id="MF_00530">
    <property type="entry name" value="ATP_synth_epsil_bac"/>
    <property type="match status" value="1"/>
</dbReference>
<dbReference type="InterPro" id="IPR001469">
    <property type="entry name" value="ATP_synth_F1_dsu/esu"/>
</dbReference>
<dbReference type="InterPro" id="IPR020546">
    <property type="entry name" value="ATP_synth_F1_dsu/esu_N"/>
</dbReference>
<dbReference type="InterPro" id="IPR020547">
    <property type="entry name" value="ATP_synth_F1_esu_C"/>
</dbReference>
<dbReference type="InterPro" id="IPR036771">
    <property type="entry name" value="ATPsynth_dsu/esu_N"/>
</dbReference>
<dbReference type="NCBIfam" id="TIGR01216">
    <property type="entry name" value="ATP_synt_epsi"/>
    <property type="match status" value="1"/>
</dbReference>
<dbReference type="NCBIfam" id="NF009980">
    <property type="entry name" value="PRK13446.1"/>
    <property type="match status" value="1"/>
</dbReference>
<dbReference type="PANTHER" id="PTHR13822">
    <property type="entry name" value="ATP SYNTHASE DELTA/EPSILON CHAIN"/>
    <property type="match status" value="1"/>
</dbReference>
<dbReference type="PANTHER" id="PTHR13822:SF10">
    <property type="entry name" value="ATP SYNTHASE EPSILON CHAIN, CHLOROPLASTIC"/>
    <property type="match status" value="1"/>
</dbReference>
<dbReference type="Pfam" id="PF00401">
    <property type="entry name" value="ATP-synt_DE"/>
    <property type="match status" value="1"/>
</dbReference>
<dbReference type="Pfam" id="PF02823">
    <property type="entry name" value="ATP-synt_DE_N"/>
    <property type="match status" value="1"/>
</dbReference>
<dbReference type="SUPFAM" id="SSF51344">
    <property type="entry name" value="Epsilon subunit of F1F0-ATP synthase N-terminal domain"/>
    <property type="match status" value="1"/>
</dbReference>
<gene>
    <name evidence="1" type="primary">atpC</name>
    <name type="ordered locus">Glov_3169</name>
</gene>
<keyword id="KW-0066">ATP synthesis</keyword>
<keyword id="KW-0997">Cell inner membrane</keyword>
<keyword id="KW-1003">Cell membrane</keyword>
<keyword id="KW-0139">CF(1)</keyword>
<keyword id="KW-0375">Hydrogen ion transport</keyword>
<keyword id="KW-0406">Ion transport</keyword>
<keyword id="KW-0472">Membrane</keyword>
<keyword id="KW-1185">Reference proteome</keyword>
<keyword id="KW-0813">Transport</keyword>
<proteinExistence type="inferred from homology"/>
<feature type="chain" id="PRO_1000127861" description="ATP synthase epsilon chain">
    <location>
        <begin position="1"/>
        <end position="138"/>
    </location>
</feature>
<organism>
    <name type="scientific">Trichlorobacter lovleyi (strain ATCC BAA-1151 / DSM 17278 / SZ)</name>
    <name type="common">Geobacter lovleyi</name>
    <dbReference type="NCBI Taxonomy" id="398767"/>
    <lineage>
        <taxon>Bacteria</taxon>
        <taxon>Pseudomonadati</taxon>
        <taxon>Thermodesulfobacteriota</taxon>
        <taxon>Desulfuromonadia</taxon>
        <taxon>Geobacterales</taxon>
        <taxon>Geobacteraceae</taxon>
        <taxon>Trichlorobacter</taxon>
    </lineage>
</organism>
<evidence type="ECO:0000255" key="1">
    <source>
        <dbReference type="HAMAP-Rule" id="MF_00530"/>
    </source>
</evidence>
<comment type="function">
    <text evidence="1">Produces ATP from ADP in the presence of a proton gradient across the membrane.</text>
</comment>
<comment type="subunit">
    <text evidence="1">F-type ATPases have 2 components, CF(1) - the catalytic core - and CF(0) - the membrane proton channel. CF(1) has five subunits: alpha(3), beta(3), gamma(1), delta(1), epsilon(1). CF(0) has three main subunits: a, b and c.</text>
</comment>
<comment type="subcellular location">
    <subcellularLocation>
        <location evidence="1">Cell inner membrane</location>
        <topology evidence="1">Peripheral membrane protein</topology>
    </subcellularLocation>
</comment>
<comment type="similarity">
    <text evidence="1">Belongs to the ATPase epsilon chain family.</text>
</comment>
<sequence length="138" mass="15319">MAEKMKLEIVTPYSKVLDELVDEVTATGKMGEFGVLPGHAPFLTSLNIGELCYKKDGQAVSMALNWGYFEVQDDKIIVLVETAERSDEIDLERAKAALGRAEDALKKLTPEDKQFKVYEAALERALIRMQVAGKAARK</sequence>
<protein>
    <recommendedName>
        <fullName evidence="1">ATP synthase epsilon chain</fullName>
    </recommendedName>
    <alternativeName>
        <fullName evidence="1">ATP synthase F1 sector epsilon subunit</fullName>
    </alternativeName>
    <alternativeName>
        <fullName evidence="1">F-ATPase epsilon subunit</fullName>
    </alternativeName>
</protein>
<accession>B3EA00</accession>